<evidence type="ECO:0000250" key="1">
    <source>
        <dbReference type="UniProtKB" id="Q5U2Y8"/>
    </source>
</evidence>
<evidence type="ECO:0000256" key="2">
    <source>
        <dbReference type="SAM" id="MobiDB-lite"/>
    </source>
</evidence>
<evidence type="ECO:0000269" key="3">
    <source>
    </source>
</evidence>
<evidence type="ECO:0000269" key="4">
    <source>
    </source>
</evidence>
<evidence type="ECO:0000269" key="5">
    <source ref="2"/>
</evidence>
<evidence type="ECO:0000312" key="6">
    <source>
        <dbReference type="HGNC" id="HGNC:28563"/>
    </source>
</evidence>
<protein>
    <recommendedName>
        <fullName>Testis-expressed protein 44</fullName>
    </recommendedName>
</protein>
<name>TEX44_HUMAN</name>
<keyword id="KW-0963">Cytoplasm</keyword>
<keyword id="KW-0597">Phosphoprotein</keyword>
<keyword id="KW-1267">Proteomics identification</keyword>
<keyword id="KW-1185">Reference proteome</keyword>
<organism>
    <name type="scientific">Homo sapiens</name>
    <name type="common">Human</name>
    <dbReference type="NCBI Taxonomy" id="9606"/>
    <lineage>
        <taxon>Eukaryota</taxon>
        <taxon>Metazoa</taxon>
        <taxon>Chordata</taxon>
        <taxon>Craniata</taxon>
        <taxon>Vertebrata</taxon>
        <taxon>Euteleostomi</taxon>
        <taxon>Mammalia</taxon>
        <taxon>Eutheria</taxon>
        <taxon>Euarchontoglires</taxon>
        <taxon>Primates</taxon>
        <taxon>Haplorrhini</taxon>
        <taxon>Catarrhini</taxon>
        <taxon>Hominidae</taxon>
        <taxon>Homo</taxon>
    </lineage>
</organism>
<proteinExistence type="evidence at protein level"/>
<accession>Q53QW1</accession>
<accession>Q8N4F2</accession>
<feature type="chain" id="PRO_0000309182" description="Testis-expressed protein 44">
    <location>
        <begin position="1"/>
        <end position="395"/>
    </location>
</feature>
<feature type="region of interest" description="Disordered" evidence="2">
    <location>
        <begin position="1"/>
        <end position="32"/>
    </location>
</feature>
<feature type="region of interest" description="Disordered" evidence="2">
    <location>
        <begin position="46"/>
        <end position="100"/>
    </location>
</feature>
<feature type="region of interest" description="Disordered" evidence="2">
    <location>
        <begin position="133"/>
        <end position="215"/>
    </location>
</feature>
<feature type="region of interest" description="Disordered" evidence="2">
    <location>
        <begin position="235"/>
        <end position="258"/>
    </location>
</feature>
<feature type="compositionally biased region" description="Polar residues" evidence="2">
    <location>
        <begin position="53"/>
        <end position="65"/>
    </location>
</feature>
<feature type="compositionally biased region" description="Low complexity" evidence="2">
    <location>
        <begin position="87"/>
        <end position="98"/>
    </location>
</feature>
<feature type="compositionally biased region" description="Basic and acidic residues" evidence="2">
    <location>
        <begin position="192"/>
        <end position="207"/>
    </location>
</feature>
<feature type="modified residue" description="Phosphoserine" evidence="1">
    <location>
        <position position="333"/>
    </location>
</feature>
<feature type="sequence variant" id="VAR_036894" description="In dbSNP:rs16828251.">
    <original>V</original>
    <variation>L</variation>
    <location>
        <position position="11"/>
    </location>
</feature>
<feature type="sequence variant" id="VAR_036895" description="In dbSNP:rs16828254.">
    <original>Q</original>
    <variation>R</variation>
    <location>
        <position position="79"/>
    </location>
</feature>
<feature type="sequence variant" id="VAR_036896" description="In dbSNP:rs16828257.">
    <original>E</original>
    <variation>K</variation>
    <location>
        <position position="168"/>
    </location>
</feature>
<feature type="sequence variant" id="VAR_036897" description="In dbSNP:rs10933378." evidence="3 5">
    <original>S</original>
    <variation>P</variation>
    <location>
        <position position="261"/>
    </location>
</feature>
<dbReference type="EMBL" id="AC104634">
    <property type="protein sequence ID" value="AAY24071.1"/>
    <property type="molecule type" value="Genomic_DNA"/>
</dbReference>
<dbReference type="EMBL" id="CH471063">
    <property type="protein sequence ID" value="EAW70967.1"/>
    <property type="molecule type" value="Genomic_DNA"/>
</dbReference>
<dbReference type="EMBL" id="BC024251">
    <property type="protein sequence ID" value="AAH24251.1"/>
    <property type="molecule type" value="mRNA"/>
</dbReference>
<dbReference type="EMBL" id="BC034405">
    <property type="protein sequence ID" value="AAH34405.1"/>
    <property type="molecule type" value="mRNA"/>
</dbReference>
<dbReference type="EMBL" id="BC063389">
    <property type="protein sequence ID" value="AAH63389.1"/>
    <property type="molecule type" value="mRNA"/>
</dbReference>
<dbReference type="CCDS" id="CCDS2487.1"/>
<dbReference type="RefSeq" id="NP_689827.2">
    <property type="nucleotide sequence ID" value="NM_152614.3"/>
</dbReference>
<dbReference type="BioGRID" id="127908">
    <property type="interactions" value="13"/>
</dbReference>
<dbReference type="FunCoup" id="Q53QW1">
    <property type="interactions" value="73"/>
</dbReference>
<dbReference type="IntAct" id="Q53QW1">
    <property type="interactions" value="12"/>
</dbReference>
<dbReference type="STRING" id="9606.ENSP00000315557"/>
<dbReference type="iPTMnet" id="Q53QW1"/>
<dbReference type="PhosphoSitePlus" id="Q53QW1"/>
<dbReference type="BioMuta" id="TEX44"/>
<dbReference type="DMDM" id="74726496"/>
<dbReference type="MassIVE" id="Q53QW1"/>
<dbReference type="PaxDb" id="9606-ENSP00000315557"/>
<dbReference type="PeptideAtlas" id="Q53QW1"/>
<dbReference type="ProteomicsDB" id="62512"/>
<dbReference type="Antibodypedia" id="34418">
    <property type="antibodies" value="48 antibodies from 9 providers"/>
</dbReference>
<dbReference type="DNASU" id="165100"/>
<dbReference type="Ensembl" id="ENST00000313965.4">
    <property type="protein sequence ID" value="ENSP00000315557.2"/>
    <property type="gene ID" value="ENSG00000177673.4"/>
</dbReference>
<dbReference type="GeneID" id="165100"/>
<dbReference type="KEGG" id="hsa:165100"/>
<dbReference type="MANE-Select" id="ENST00000313965.4">
    <property type="protein sequence ID" value="ENSP00000315557.2"/>
    <property type="RefSeq nucleotide sequence ID" value="NM_152614.3"/>
    <property type="RefSeq protein sequence ID" value="NP_689827.2"/>
</dbReference>
<dbReference type="UCSC" id="uc002vrz.4">
    <property type="organism name" value="human"/>
</dbReference>
<dbReference type="AGR" id="HGNC:28563"/>
<dbReference type="CTD" id="165100"/>
<dbReference type="DisGeNET" id="165100"/>
<dbReference type="GeneCards" id="TEX44"/>
<dbReference type="HGNC" id="HGNC:28563">
    <property type="gene designation" value="TEX44"/>
</dbReference>
<dbReference type="HPA" id="ENSG00000177673">
    <property type="expression patterns" value="Tissue enriched (testis)"/>
</dbReference>
<dbReference type="neXtProt" id="NX_Q53QW1"/>
<dbReference type="OpenTargets" id="ENSG00000177673"/>
<dbReference type="PharmGKB" id="PA162379291"/>
<dbReference type="VEuPathDB" id="HostDB:ENSG00000177673"/>
<dbReference type="eggNOG" id="ENOG502TDPT">
    <property type="taxonomic scope" value="Eukaryota"/>
</dbReference>
<dbReference type="GeneTree" id="ENSGT00390000009950"/>
<dbReference type="HOGENOM" id="CLU_038692_0_0_1"/>
<dbReference type="InParanoid" id="Q53QW1"/>
<dbReference type="OMA" id="VWSETTM"/>
<dbReference type="OrthoDB" id="9838056at2759"/>
<dbReference type="PAN-GO" id="Q53QW1">
    <property type="GO annotations" value="0 GO annotations based on evolutionary models"/>
</dbReference>
<dbReference type="PhylomeDB" id="Q53QW1"/>
<dbReference type="TreeFam" id="TF338437"/>
<dbReference type="PathwayCommons" id="Q53QW1"/>
<dbReference type="SignaLink" id="Q53QW1"/>
<dbReference type="BioGRID-ORCS" id="165100">
    <property type="hits" value="13 hits in 1106 CRISPR screens"/>
</dbReference>
<dbReference type="ChiTaRS" id="C2orf57">
    <property type="organism name" value="human"/>
</dbReference>
<dbReference type="GenomeRNAi" id="165100"/>
<dbReference type="Pharos" id="Q53QW1">
    <property type="development level" value="Tdark"/>
</dbReference>
<dbReference type="PRO" id="PR:Q53QW1"/>
<dbReference type="Proteomes" id="UP000005640">
    <property type="component" value="Chromosome 2"/>
</dbReference>
<dbReference type="RNAct" id="Q53QW1">
    <property type="molecule type" value="protein"/>
</dbReference>
<dbReference type="Bgee" id="ENSG00000177673">
    <property type="expression patterns" value="Expressed in left testis and 49 other cell types or tissues"/>
</dbReference>
<dbReference type="GO" id="GO:0005737">
    <property type="term" value="C:cytoplasm"/>
    <property type="evidence" value="ECO:0000314"/>
    <property type="project" value="UniProtKB"/>
</dbReference>
<dbReference type="InterPro" id="IPR031460">
    <property type="entry name" value="DUF4678"/>
</dbReference>
<dbReference type="PANTHER" id="PTHR37365">
    <property type="entry name" value="TESTIS-EXPRESSED PROTEIN 44"/>
    <property type="match status" value="1"/>
</dbReference>
<dbReference type="PANTHER" id="PTHR37365:SF1">
    <property type="entry name" value="TESTIS-EXPRESSED PROTEIN 44"/>
    <property type="match status" value="1"/>
</dbReference>
<dbReference type="Pfam" id="PF15727">
    <property type="entry name" value="DUF4678"/>
    <property type="match status" value="1"/>
</dbReference>
<gene>
    <name evidence="6" type="primary">TEX44</name>
    <name type="synonym">C2orf57</name>
</gene>
<comment type="interaction">
    <interactant intactId="EBI-10278496">
        <id>Q53QW1</id>
    </interactant>
    <interactant intactId="EBI-1220105">
        <id>P02654</id>
        <label>APOC1</label>
    </interactant>
    <organismsDiffer>false</organismsDiffer>
    <experiments>5</experiments>
</comment>
<comment type="interaction">
    <interactant intactId="EBI-10278496">
        <id>Q53QW1</id>
    </interactant>
    <interactant intactId="EBI-13382270">
        <id>Q6P1S2</id>
        <label>C3orf33</label>
    </interactant>
    <organismsDiffer>false</organismsDiffer>
    <experiments>3</experiments>
</comment>
<comment type="interaction">
    <interactant intactId="EBI-10278496">
        <id>Q53QW1</id>
    </interactant>
    <interactant intactId="EBI-7062247">
        <id>Q9UHD4</id>
        <label>CIDEB</label>
    </interactant>
    <organismsDiffer>false</organismsDiffer>
    <experiments>5</experiments>
</comment>
<comment type="interaction">
    <interactant intactId="EBI-10278496">
        <id>Q53QW1</id>
    </interactant>
    <interactant intactId="EBI-2834035">
        <id>Q5RI15</id>
        <label>COX20</label>
    </interactant>
    <organismsDiffer>false</organismsDiffer>
    <experiments>3</experiments>
</comment>
<comment type="interaction">
    <interactant intactId="EBI-10278496">
        <id>Q53QW1</id>
    </interactant>
    <interactant intactId="EBI-10278486">
        <id>Q92523</id>
        <label>CPT1B</label>
    </interactant>
    <organismsDiffer>false</organismsDiffer>
    <experiments>6</experiments>
</comment>
<comment type="interaction">
    <interactant intactId="EBI-10278496">
        <id>Q53QW1</id>
    </interactant>
    <interactant intactId="EBI-398977">
        <id>Q9BUN8</id>
        <label>DERL1</label>
    </interactant>
    <organismsDiffer>false</organismsDiffer>
    <experiments>3</experiments>
</comment>
<comment type="interaction">
    <interactant intactId="EBI-10278496">
        <id>Q53QW1</id>
    </interactant>
    <interactant intactId="EBI-1053887">
        <id>Q5XKP0</id>
        <label>MICOS13</label>
    </interactant>
    <organismsDiffer>false</organismsDiffer>
    <experiments>3</experiments>
</comment>
<comment type="interaction">
    <interactant intactId="EBI-10278496">
        <id>Q53QW1</id>
    </interactant>
    <interactant intactId="EBI-719403">
        <id>O95563</id>
        <label>MPC2</label>
    </interactant>
    <organismsDiffer>false</organismsDiffer>
    <experiments>3</experiments>
</comment>
<comment type="interaction">
    <interactant intactId="EBI-10278496">
        <id>Q53QW1</id>
    </interactant>
    <interactant intactId="EBI-17589229">
        <id>Q6NTF9-3</id>
        <label>RHBDD2</label>
    </interactant>
    <organismsDiffer>false</organismsDiffer>
    <experiments>3</experiments>
</comment>
<comment type="interaction">
    <interactant intactId="EBI-10278496">
        <id>Q53QW1</id>
    </interactant>
    <interactant intactId="EBI-2800683">
        <id>Q16563</id>
        <label>SYPL1</label>
    </interactant>
    <organismsDiffer>false</organismsDiffer>
    <experiments>3</experiments>
</comment>
<comment type="interaction">
    <interactant intactId="EBI-10278496">
        <id>Q53QW1</id>
    </interactant>
    <interactant intactId="EBI-2372529">
        <id>O60830</id>
        <label>TIMM17B</label>
    </interactant>
    <organismsDiffer>false</organismsDiffer>
    <experiments>3</experiments>
</comment>
<comment type="interaction">
    <interactant intactId="EBI-10278496">
        <id>Q53QW1</id>
    </interactant>
    <interactant intactId="EBI-8638294">
        <id>Q9NUH8</id>
        <label>TMEM14B</label>
    </interactant>
    <organismsDiffer>false</organismsDiffer>
    <experiments>3</experiments>
</comment>
<comment type="subcellular location">
    <subcellularLocation>
        <location evidence="4">Cytoplasm</location>
    </subcellularLocation>
</comment>
<comment type="tissue specificity">
    <text evidence="4">Testis. Detected in germ cells at all stages of the seminiferous epithelium, strong expression in elongating spermatids (at protein level) (PubMed:26168773).</text>
</comment>
<sequence length="395" mass="41589">MALPGYPLGNVDDSRSKDSPAGEPQGQVPLTADVLAVSSSVASTDWQDIDQASFKTATPRAISTSGDKDKSAVVPEHGQKTPRKITPLLPSQNPSPLQVSMSLQNPAWDRQVQDARTSQSLVVFPSHLLGKDKMSQMASVPEREPESAPSAPSAELQSTQHMEAQPVESDADHVTAGANGQHGPQAASTTKSAEEKAEHPKAPHPEAEALPSDESPVAMGANVVDSLGDLQTWFFPPPPAGSVSPSPGPHEVALGRRPLDSSLYTASEENSYMRSMTSLLDRGEGSISSLADILVWSETTMGMAIATGFLDSGHSTVADLLHSSGPSLRSVPSLVGSVSSAFSSGLVSGTSSALRTITRVLETVEQRTVEGIRSAMRYLTSHLTPRQAQADPNYD</sequence>
<reference key="1">
    <citation type="journal article" date="2005" name="Nature">
        <title>Generation and annotation of the DNA sequences of human chromosomes 2 and 4.</title>
        <authorList>
            <person name="Hillier L.W."/>
            <person name="Graves T.A."/>
            <person name="Fulton R.S."/>
            <person name="Fulton L.A."/>
            <person name="Pepin K.H."/>
            <person name="Minx P."/>
            <person name="Wagner-McPherson C."/>
            <person name="Layman D."/>
            <person name="Wylie K."/>
            <person name="Sekhon M."/>
            <person name="Becker M.C."/>
            <person name="Fewell G.A."/>
            <person name="Delehaunty K.D."/>
            <person name="Miner T.L."/>
            <person name="Nash W.E."/>
            <person name="Kremitzki C."/>
            <person name="Oddy L."/>
            <person name="Du H."/>
            <person name="Sun H."/>
            <person name="Bradshaw-Cordum H."/>
            <person name="Ali J."/>
            <person name="Carter J."/>
            <person name="Cordes M."/>
            <person name="Harris A."/>
            <person name="Isak A."/>
            <person name="van Brunt A."/>
            <person name="Nguyen C."/>
            <person name="Du F."/>
            <person name="Courtney L."/>
            <person name="Kalicki J."/>
            <person name="Ozersky P."/>
            <person name="Abbott S."/>
            <person name="Armstrong J."/>
            <person name="Belter E.A."/>
            <person name="Caruso L."/>
            <person name="Cedroni M."/>
            <person name="Cotton M."/>
            <person name="Davidson T."/>
            <person name="Desai A."/>
            <person name="Elliott G."/>
            <person name="Erb T."/>
            <person name="Fronick C."/>
            <person name="Gaige T."/>
            <person name="Haakenson W."/>
            <person name="Haglund K."/>
            <person name="Holmes A."/>
            <person name="Harkins R."/>
            <person name="Kim K."/>
            <person name="Kruchowski S.S."/>
            <person name="Strong C.M."/>
            <person name="Grewal N."/>
            <person name="Goyea E."/>
            <person name="Hou S."/>
            <person name="Levy A."/>
            <person name="Martinka S."/>
            <person name="Mead K."/>
            <person name="McLellan M.D."/>
            <person name="Meyer R."/>
            <person name="Randall-Maher J."/>
            <person name="Tomlinson C."/>
            <person name="Dauphin-Kohlberg S."/>
            <person name="Kozlowicz-Reilly A."/>
            <person name="Shah N."/>
            <person name="Swearengen-Shahid S."/>
            <person name="Snider J."/>
            <person name="Strong J.T."/>
            <person name="Thompson J."/>
            <person name="Yoakum M."/>
            <person name="Leonard S."/>
            <person name="Pearman C."/>
            <person name="Trani L."/>
            <person name="Radionenko M."/>
            <person name="Waligorski J.E."/>
            <person name="Wang C."/>
            <person name="Rock S.M."/>
            <person name="Tin-Wollam A.-M."/>
            <person name="Maupin R."/>
            <person name="Latreille P."/>
            <person name="Wendl M.C."/>
            <person name="Yang S.-P."/>
            <person name="Pohl C."/>
            <person name="Wallis J.W."/>
            <person name="Spieth J."/>
            <person name="Bieri T.A."/>
            <person name="Berkowicz N."/>
            <person name="Nelson J.O."/>
            <person name="Osborne J."/>
            <person name="Ding L."/>
            <person name="Meyer R."/>
            <person name="Sabo A."/>
            <person name="Shotland Y."/>
            <person name="Sinha P."/>
            <person name="Wohldmann P.E."/>
            <person name="Cook L.L."/>
            <person name="Hickenbotham M.T."/>
            <person name="Eldred J."/>
            <person name="Williams D."/>
            <person name="Jones T.A."/>
            <person name="She X."/>
            <person name="Ciccarelli F.D."/>
            <person name="Izaurralde E."/>
            <person name="Taylor J."/>
            <person name="Schmutz J."/>
            <person name="Myers R.M."/>
            <person name="Cox D.R."/>
            <person name="Huang X."/>
            <person name="McPherson J.D."/>
            <person name="Mardis E.R."/>
            <person name="Clifton S.W."/>
            <person name="Warren W.C."/>
            <person name="Chinwalla A.T."/>
            <person name="Eddy S.R."/>
            <person name="Marra M.A."/>
            <person name="Ovcharenko I."/>
            <person name="Furey T.S."/>
            <person name="Miller W."/>
            <person name="Eichler E.E."/>
            <person name="Bork P."/>
            <person name="Suyama M."/>
            <person name="Torrents D."/>
            <person name="Waterston R.H."/>
            <person name="Wilson R.K."/>
        </authorList>
    </citation>
    <scope>NUCLEOTIDE SEQUENCE [LARGE SCALE GENOMIC DNA]</scope>
</reference>
<reference key="2">
    <citation type="submission" date="2005-07" db="EMBL/GenBank/DDBJ databases">
        <authorList>
            <person name="Mural R.J."/>
            <person name="Istrail S."/>
            <person name="Sutton G.G."/>
            <person name="Florea L."/>
            <person name="Halpern A.L."/>
            <person name="Mobarry C.M."/>
            <person name="Lippert R."/>
            <person name="Walenz B."/>
            <person name="Shatkay H."/>
            <person name="Dew I."/>
            <person name="Miller J.R."/>
            <person name="Flanigan M.J."/>
            <person name="Edwards N.J."/>
            <person name="Bolanos R."/>
            <person name="Fasulo D."/>
            <person name="Halldorsson B.V."/>
            <person name="Hannenhalli S."/>
            <person name="Turner R."/>
            <person name="Yooseph S."/>
            <person name="Lu F."/>
            <person name="Nusskern D.R."/>
            <person name="Shue B.C."/>
            <person name="Zheng X.H."/>
            <person name="Zhong F."/>
            <person name="Delcher A.L."/>
            <person name="Huson D.H."/>
            <person name="Kravitz S.A."/>
            <person name="Mouchard L."/>
            <person name="Reinert K."/>
            <person name="Remington K.A."/>
            <person name="Clark A.G."/>
            <person name="Waterman M.S."/>
            <person name="Eichler E.E."/>
            <person name="Adams M.D."/>
            <person name="Hunkapiller M.W."/>
            <person name="Myers E.W."/>
            <person name="Venter J.C."/>
        </authorList>
    </citation>
    <scope>NUCLEOTIDE SEQUENCE [LARGE SCALE GENOMIC DNA]</scope>
    <scope>VARIANT PRO-261</scope>
</reference>
<reference key="3">
    <citation type="journal article" date="2004" name="Genome Res.">
        <title>The status, quality, and expansion of the NIH full-length cDNA project: the Mammalian Gene Collection (MGC).</title>
        <authorList>
            <consortium name="The MGC Project Team"/>
        </authorList>
    </citation>
    <scope>NUCLEOTIDE SEQUENCE [LARGE SCALE MRNA]</scope>
    <scope>VARIANT PRO-261</scope>
    <source>
        <tissue>Brain</tissue>
        <tissue>Testis</tissue>
    </source>
</reference>
<reference key="4">
    <citation type="journal article" date="2015" name="J. Proteome Res.">
        <title>Human spermatozoa as a model for detecting missing proteins in the context of the chromosome-centric human proteome project.</title>
        <authorList>
            <person name="Jumeau F."/>
            <person name="Com E."/>
            <person name="Lane L."/>
            <person name="Duek P."/>
            <person name="Lagarrigue M."/>
            <person name="Lavigne R."/>
            <person name="Guillot L."/>
            <person name="Rondel K."/>
            <person name="Gateau A."/>
            <person name="Melaine N."/>
            <person name="Guevel B."/>
            <person name="Sergeant N."/>
            <person name="Mitchell V."/>
            <person name="Pineau C."/>
        </authorList>
    </citation>
    <scope>TISSUE SPECIFICITY</scope>
    <scope>SUBCELLULAR LOCATION</scope>
    <scope>IDENTIFICATION BY MASS SPECTROMETRY</scope>
</reference>